<name>NIP7_SCHPO</name>
<gene>
    <name type="primary">nip7</name>
    <name type="ORF">SPCC320.11c</name>
    <name type="ORF">SPCC330.18</name>
</gene>
<feature type="chain" id="PRO_0000343163" description="60S ribosome subunit biogenesis protein nip7">
    <location>
        <begin position="1"/>
        <end position="180"/>
    </location>
</feature>
<feature type="domain" description="PUA" evidence="2">
    <location>
        <begin position="94"/>
        <end position="170"/>
    </location>
</feature>
<evidence type="ECO:0000250" key="1"/>
<evidence type="ECO:0000255" key="2">
    <source>
        <dbReference type="PROSITE-ProRule" id="PRU00161"/>
    </source>
</evidence>
<evidence type="ECO:0000269" key="3">
    <source>
    </source>
</evidence>
<evidence type="ECO:0000305" key="4"/>
<keyword id="KW-0002">3D-structure</keyword>
<keyword id="KW-0963">Cytoplasm</keyword>
<keyword id="KW-0539">Nucleus</keyword>
<keyword id="KW-1185">Reference proteome</keyword>
<keyword id="KW-0690">Ribosome biogenesis</keyword>
<keyword id="KW-0694">RNA-binding</keyword>
<reference key="1">
    <citation type="journal article" date="2002" name="Nature">
        <title>The genome sequence of Schizosaccharomyces pombe.</title>
        <authorList>
            <person name="Wood V."/>
            <person name="Gwilliam R."/>
            <person name="Rajandream M.A."/>
            <person name="Lyne M.H."/>
            <person name="Lyne R."/>
            <person name="Stewart A."/>
            <person name="Sgouros J.G."/>
            <person name="Peat N."/>
            <person name="Hayles J."/>
            <person name="Baker S.G."/>
            <person name="Basham D."/>
            <person name="Bowman S."/>
            <person name="Brooks K."/>
            <person name="Brown D."/>
            <person name="Brown S."/>
            <person name="Chillingworth T."/>
            <person name="Churcher C.M."/>
            <person name="Collins M."/>
            <person name="Connor R."/>
            <person name="Cronin A."/>
            <person name="Davis P."/>
            <person name="Feltwell T."/>
            <person name="Fraser A."/>
            <person name="Gentles S."/>
            <person name="Goble A."/>
            <person name="Hamlin N."/>
            <person name="Harris D.E."/>
            <person name="Hidalgo J."/>
            <person name="Hodgson G."/>
            <person name="Holroyd S."/>
            <person name="Hornsby T."/>
            <person name="Howarth S."/>
            <person name="Huckle E.J."/>
            <person name="Hunt S."/>
            <person name="Jagels K."/>
            <person name="James K.D."/>
            <person name="Jones L."/>
            <person name="Jones M."/>
            <person name="Leather S."/>
            <person name="McDonald S."/>
            <person name="McLean J."/>
            <person name="Mooney P."/>
            <person name="Moule S."/>
            <person name="Mungall K.L."/>
            <person name="Murphy L.D."/>
            <person name="Niblett D."/>
            <person name="Odell C."/>
            <person name="Oliver K."/>
            <person name="O'Neil S."/>
            <person name="Pearson D."/>
            <person name="Quail M.A."/>
            <person name="Rabbinowitsch E."/>
            <person name="Rutherford K.M."/>
            <person name="Rutter S."/>
            <person name="Saunders D."/>
            <person name="Seeger K."/>
            <person name="Sharp S."/>
            <person name="Skelton J."/>
            <person name="Simmonds M.N."/>
            <person name="Squares R."/>
            <person name="Squares S."/>
            <person name="Stevens K."/>
            <person name="Taylor K."/>
            <person name="Taylor R.G."/>
            <person name="Tivey A."/>
            <person name="Walsh S.V."/>
            <person name="Warren T."/>
            <person name="Whitehead S."/>
            <person name="Woodward J.R."/>
            <person name="Volckaert G."/>
            <person name="Aert R."/>
            <person name="Robben J."/>
            <person name="Grymonprez B."/>
            <person name="Weltjens I."/>
            <person name="Vanstreels E."/>
            <person name="Rieger M."/>
            <person name="Schaefer M."/>
            <person name="Mueller-Auer S."/>
            <person name="Gabel C."/>
            <person name="Fuchs M."/>
            <person name="Duesterhoeft A."/>
            <person name="Fritzc C."/>
            <person name="Holzer E."/>
            <person name="Moestl D."/>
            <person name="Hilbert H."/>
            <person name="Borzym K."/>
            <person name="Langer I."/>
            <person name="Beck A."/>
            <person name="Lehrach H."/>
            <person name="Reinhardt R."/>
            <person name="Pohl T.M."/>
            <person name="Eger P."/>
            <person name="Zimmermann W."/>
            <person name="Wedler H."/>
            <person name="Wambutt R."/>
            <person name="Purnelle B."/>
            <person name="Goffeau A."/>
            <person name="Cadieu E."/>
            <person name="Dreano S."/>
            <person name="Gloux S."/>
            <person name="Lelaure V."/>
            <person name="Mottier S."/>
            <person name="Galibert F."/>
            <person name="Aves S.J."/>
            <person name="Xiang Z."/>
            <person name="Hunt C."/>
            <person name="Moore K."/>
            <person name="Hurst S.M."/>
            <person name="Lucas M."/>
            <person name="Rochet M."/>
            <person name="Gaillardin C."/>
            <person name="Tallada V.A."/>
            <person name="Garzon A."/>
            <person name="Thode G."/>
            <person name="Daga R.R."/>
            <person name="Cruzado L."/>
            <person name="Jimenez J."/>
            <person name="Sanchez M."/>
            <person name="del Rey F."/>
            <person name="Benito J."/>
            <person name="Dominguez A."/>
            <person name="Revuelta J.L."/>
            <person name="Moreno S."/>
            <person name="Armstrong J."/>
            <person name="Forsburg S.L."/>
            <person name="Cerutti L."/>
            <person name="Lowe T."/>
            <person name="McCombie W.R."/>
            <person name="Paulsen I."/>
            <person name="Potashkin J."/>
            <person name="Shpakovski G.V."/>
            <person name="Ussery D."/>
            <person name="Barrell B.G."/>
            <person name="Nurse P."/>
        </authorList>
    </citation>
    <scope>NUCLEOTIDE SEQUENCE [LARGE SCALE GENOMIC DNA]</scope>
    <source>
        <strain>972 / ATCC 24843</strain>
    </source>
</reference>
<reference key="2">
    <citation type="journal article" date="2006" name="Nat. Biotechnol.">
        <title>ORFeome cloning and global analysis of protein localization in the fission yeast Schizosaccharomyces pombe.</title>
        <authorList>
            <person name="Matsuyama A."/>
            <person name="Arai R."/>
            <person name="Yashiroda Y."/>
            <person name="Shirai A."/>
            <person name="Kamata A."/>
            <person name="Sekido S."/>
            <person name="Kobayashi Y."/>
            <person name="Hashimoto A."/>
            <person name="Hamamoto M."/>
            <person name="Hiraoka Y."/>
            <person name="Horinouchi S."/>
            <person name="Yoshida M."/>
        </authorList>
    </citation>
    <scope>SUBCELLULAR LOCATION [LARGE SCALE ANALYSIS]</scope>
</reference>
<protein>
    <recommendedName>
        <fullName>60S ribosome subunit biogenesis protein nip7</fullName>
    </recommendedName>
</protein>
<sequence length="180" mass="20860">MRPLTHEETKTFFEKLAQYIGKNITHLIDRPDDPHCFRLQKDRVYYVSERAMKMATSVARQNLMSLGICFGKFTKTNKFRLHITALDYIAQYARYKIWVKSNGEMPFLYGNHVLKAHVGRITDDTPQHQGVVIYSMNDTPLGFGVTARSTLELRRLEPTAIVAFHQADVGEYLRDEDTLF</sequence>
<proteinExistence type="evidence at protein level"/>
<comment type="function">
    <text evidence="1">Required for proper 27S pre-rRNA processing and 60S ribosome subunit assembly.</text>
</comment>
<comment type="subunit">
    <text evidence="1">Interacts with pre-ribosome complex.</text>
</comment>
<comment type="subcellular location">
    <subcellularLocation>
        <location evidence="3">Cytoplasm</location>
    </subcellularLocation>
    <subcellularLocation>
        <location evidence="3">Nucleus</location>
        <location evidence="3">Nucleolus</location>
    </subcellularLocation>
</comment>
<comment type="similarity">
    <text evidence="4">Belongs to the NIP7 family.</text>
</comment>
<dbReference type="EMBL" id="CU329672">
    <property type="protein sequence ID" value="CAA20923.1"/>
    <property type="molecule type" value="Genomic_DNA"/>
</dbReference>
<dbReference type="PIR" id="T41300">
    <property type="entry name" value="T41300"/>
</dbReference>
<dbReference type="RefSeq" id="NP_587718.1">
    <property type="nucleotide sequence ID" value="NM_001022713.2"/>
</dbReference>
<dbReference type="PDB" id="8ESQ">
    <property type="method" value="EM"/>
    <property type="resolution" value="2.80 A"/>
    <property type="chains" value="l=1-180"/>
</dbReference>
<dbReference type="PDB" id="8ESR">
    <property type="method" value="EM"/>
    <property type="resolution" value="3.20 A"/>
    <property type="chains" value="l=1-180"/>
</dbReference>
<dbReference type="PDBsum" id="8ESQ"/>
<dbReference type="PDBsum" id="8ESR"/>
<dbReference type="SMR" id="Q1MTQ9"/>
<dbReference type="FunCoup" id="Q1MTQ9">
    <property type="interactions" value="474"/>
</dbReference>
<dbReference type="STRING" id="284812.Q1MTQ9"/>
<dbReference type="iPTMnet" id="Q1MTQ9"/>
<dbReference type="PaxDb" id="4896-SPCC320.11c.1"/>
<dbReference type="EnsemblFungi" id="SPCC320.11c.1">
    <property type="protein sequence ID" value="SPCC320.11c.1:pep"/>
    <property type="gene ID" value="SPCC320.11c"/>
</dbReference>
<dbReference type="GeneID" id="2539255"/>
<dbReference type="KEGG" id="spo:2539255"/>
<dbReference type="PomBase" id="SPCC320.11c">
    <property type="gene designation" value="nip7"/>
</dbReference>
<dbReference type="VEuPathDB" id="FungiDB:SPCC320.11c"/>
<dbReference type="eggNOG" id="KOG3492">
    <property type="taxonomic scope" value="Eukaryota"/>
</dbReference>
<dbReference type="HOGENOM" id="CLU_097217_0_0_1"/>
<dbReference type="InParanoid" id="Q1MTQ9"/>
<dbReference type="OMA" id="LISMGTC"/>
<dbReference type="PhylomeDB" id="Q1MTQ9"/>
<dbReference type="PRO" id="PR:Q1MTQ9"/>
<dbReference type="Proteomes" id="UP000002485">
    <property type="component" value="Chromosome III"/>
</dbReference>
<dbReference type="GO" id="GO:0005829">
    <property type="term" value="C:cytosol"/>
    <property type="evidence" value="ECO:0007005"/>
    <property type="project" value="PomBase"/>
</dbReference>
<dbReference type="GO" id="GO:0005730">
    <property type="term" value="C:nucleolus"/>
    <property type="evidence" value="ECO:0007005"/>
    <property type="project" value="PomBase"/>
</dbReference>
<dbReference type="GO" id="GO:0005634">
    <property type="term" value="C:nucleus"/>
    <property type="evidence" value="ECO:0007005"/>
    <property type="project" value="PomBase"/>
</dbReference>
<dbReference type="GO" id="GO:0030684">
    <property type="term" value="C:preribosome"/>
    <property type="evidence" value="ECO:0000314"/>
    <property type="project" value="PomBase"/>
</dbReference>
<dbReference type="GO" id="GO:0030687">
    <property type="term" value="C:preribosome, large subunit precursor"/>
    <property type="evidence" value="ECO:0000318"/>
    <property type="project" value="GO_Central"/>
</dbReference>
<dbReference type="GO" id="GO:0003723">
    <property type="term" value="F:RNA binding"/>
    <property type="evidence" value="ECO:0000303"/>
    <property type="project" value="PomBase"/>
</dbReference>
<dbReference type="GO" id="GO:1902626">
    <property type="term" value="P:assembly of large subunit precursor of preribosome"/>
    <property type="evidence" value="ECO:0000269"/>
    <property type="project" value="PomBase"/>
</dbReference>
<dbReference type="GO" id="GO:0042273">
    <property type="term" value="P:ribosomal large subunit biogenesis"/>
    <property type="evidence" value="ECO:0000318"/>
    <property type="project" value="GO_Central"/>
</dbReference>
<dbReference type="CDD" id="cd21146">
    <property type="entry name" value="Nip7_N_euk"/>
    <property type="match status" value="1"/>
</dbReference>
<dbReference type="CDD" id="cd21151">
    <property type="entry name" value="PUA_Nip7-like"/>
    <property type="match status" value="1"/>
</dbReference>
<dbReference type="FunFam" id="2.30.130.10:FF:000002">
    <property type="entry name" value="60S ribosome subunit biogenesis protein NIP7 homolog"/>
    <property type="match status" value="1"/>
</dbReference>
<dbReference type="FunFam" id="3.10.450.220:FF:000001">
    <property type="entry name" value="60S ribosome subunit biogenesis protein NIP7 homolog"/>
    <property type="match status" value="1"/>
</dbReference>
<dbReference type="Gene3D" id="3.10.450.220">
    <property type="match status" value="1"/>
</dbReference>
<dbReference type="Gene3D" id="2.30.130.10">
    <property type="entry name" value="PUA domain"/>
    <property type="match status" value="1"/>
</dbReference>
<dbReference type="InterPro" id="IPR040598">
    <property type="entry name" value="NIP7_N"/>
</dbReference>
<dbReference type="InterPro" id="IPR055359">
    <property type="entry name" value="Nip7_N_euk"/>
</dbReference>
<dbReference type="InterPro" id="IPR002478">
    <property type="entry name" value="PUA"/>
</dbReference>
<dbReference type="InterPro" id="IPR015947">
    <property type="entry name" value="PUA-like_sf"/>
</dbReference>
<dbReference type="InterPro" id="IPR036974">
    <property type="entry name" value="PUA_sf"/>
</dbReference>
<dbReference type="InterPro" id="IPR016686">
    <property type="entry name" value="Ribosomal_synth_fac_NIP7"/>
</dbReference>
<dbReference type="InterPro" id="IPR005155">
    <property type="entry name" value="UPF0113_PUA"/>
</dbReference>
<dbReference type="PANTHER" id="PTHR23415">
    <property type="entry name" value="CYCLIN-DEPENDENT KINASES REGULATORY SUBUNIT/60S RIBOSOME SUBUNIT BIOGENESIS PROTEIN NIP7"/>
    <property type="match status" value="1"/>
</dbReference>
<dbReference type="Pfam" id="PF17833">
    <property type="entry name" value="pre-PUA_NIP7"/>
    <property type="match status" value="1"/>
</dbReference>
<dbReference type="Pfam" id="PF03657">
    <property type="entry name" value="UPF0113"/>
    <property type="match status" value="1"/>
</dbReference>
<dbReference type="PIRSF" id="PIRSF017190">
    <property type="entry name" value="Rbsml_synth_fac_NIP7"/>
    <property type="match status" value="1"/>
</dbReference>
<dbReference type="SMART" id="SM00359">
    <property type="entry name" value="PUA"/>
    <property type="match status" value="1"/>
</dbReference>
<dbReference type="SUPFAM" id="SSF88802">
    <property type="entry name" value="Pre-PUA domain"/>
    <property type="match status" value="1"/>
</dbReference>
<dbReference type="SUPFAM" id="SSF88697">
    <property type="entry name" value="PUA domain-like"/>
    <property type="match status" value="1"/>
</dbReference>
<dbReference type="PROSITE" id="PS50890">
    <property type="entry name" value="PUA"/>
    <property type="match status" value="1"/>
</dbReference>
<accession>Q1MTQ9</accession>
<organism>
    <name type="scientific">Schizosaccharomyces pombe (strain 972 / ATCC 24843)</name>
    <name type="common">Fission yeast</name>
    <dbReference type="NCBI Taxonomy" id="284812"/>
    <lineage>
        <taxon>Eukaryota</taxon>
        <taxon>Fungi</taxon>
        <taxon>Dikarya</taxon>
        <taxon>Ascomycota</taxon>
        <taxon>Taphrinomycotina</taxon>
        <taxon>Schizosaccharomycetes</taxon>
        <taxon>Schizosaccharomycetales</taxon>
        <taxon>Schizosaccharomycetaceae</taxon>
        <taxon>Schizosaccharomyces</taxon>
    </lineage>
</organism>